<gene>
    <name evidence="7" type="primary">brlA</name>
    <name type="ORF">PDE_00087</name>
</gene>
<accession>S7Z906</accession>
<dbReference type="EMBL" id="KB644408">
    <property type="protein sequence ID" value="EPS25156.1"/>
    <property type="molecule type" value="Genomic_DNA"/>
</dbReference>
<dbReference type="SMR" id="S7Z906"/>
<dbReference type="STRING" id="933388.S7Z906"/>
<dbReference type="eggNOG" id="KOG1721">
    <property type="taxonomic scope" value="Eukaryota"/>
</dbReference>
<dbReference type="HOGENOM" id="CLU_655506_0_0_1"/>
<dbReference type="OrthoDB" id="654211at2759"/>
<dbReference type="PhylomeDB" id="S7Z906"/>
<dbReference type="Proteomes" id="UP000019376">
    <property type="component" value="Unassembled WGS sequence"/>
</dbReference>
<dbReference type="GO" id="GO:0000785">
    <property type="term" value="C:chromatin"/>
    <property type="evidence" value="ECO:0007669"/>
    <property type="project" value="TreeGrafter"/>
</dbReference>
<dbReference type="GO" id="GO:0005634">
    <property type="term" value="C:nucleus"/>
    <property type="evidence" value="ECO:0007669"/>
    <property type="project" value="UniProtKB-SubCell"/>
</dbReference>
<dbReference type="GO" id="GO:0005667">
    <property type="term" value="C:transcription regulator complex"/>
    <property type="evidence" value="ECO:0007669"/>
    <property type="project" value="TreeGrafter"/>
</dbReference>
<dbReference type="GO" id="GO:0000981">
    <property type="term" value="F:DNA-binding transcription factor activity, RNA polymerase II-specific"/>
    <property type="evidence" value="ECO:0007669"/>
    <property type="project" value="TreeGrafter"/>
</dbReference>
<dbReference type="GO" id="GO:0000978">
    <property type="term" value="F:RNA polymerase II cis-regulatory region sequence-specific DNA binding"/>
    <property type="evidence" value="ECO:0007669"/>
    <property type="project" value="TreeGrafter"/>
</dbReference>
<dbReference type="GO" id="GO:0008270">
    <property type="term" value="F:zinc ion binding"/>
    <property type="evidence" value="ECO:0007669"/>
    <property type="project" value="UniProtKB-KW"/>
</dbReference>
<dbReference type="GO" id="GO:0048315">
    <property type="term" value="P:conidium formation"/>
    <property type="evidence" value="ECO:0007669"/>
    <property type="project" value="UniProtKB-KW"/>
</dbReference>
<dbReference type="GO" id="GO:0030435">
    <property type="term" value="P:sporulation resulting in formation of a cellular spore"/>
    <property type="evidence" value="ECO:0007669"/>
    <property type="project" value="UniProtKB-KW"/>
</dbReference>
<dbReference type="FunFam" id="3.30.160.60:FF:000845">
    <property type="entry name" value="C2H2 type conidiation transcription factor BrlA"/>
    <property type="match status" value="1"/>
</dbReference>
<dbReference type="Gene3D" id="3.30.160.60">
    <property type="entry name" value="Classic Zinc Finger"/>
    <property type="match status" value="2"/>
</dbReference>
<dbReference type="InterPro" id="IPR036236">
    <property type="entry name" value="Znf_C2H2_sf"/>
</dbReference>
<dbReference type="InterPro" id="IPR013087">
    <property type="entry name" value="Znf_C2H2_type"/>
</dbReference>
<dbReference type="PANTHER" id="PTHR14003">
    <property type="entry name" value="TRANSCRIPTIONAL REPRESSOR PROTEIN YY"/>
    <property type="match status" value="1"/>
</dbReference>
<dbReference type="PANTHER" id="PTHR14003:SF19">
    <property type="entry name" value="YY2 TRANSCRIPTION FACTOR"/>
    <property type="match status" value="1"/>
</dbReference>
<dbReference type="Pfam" id="PF00096">
    <property type="entry name" value="zf-C2H2"/>
    <property type="match status" value="2"/>
</dbReference>
<dbReference type="SMART" id="SM00355">
    <property type="entry name" value="ZnF_C2H2"/>
    <property type="match status" value="2"/>
</dbReference>
<dbReference type="SUPFAM" id="SSF57667">
    <property type="entry name" value="beta-beta-alpha zinc fingers"/>
    <property type="match status" value="1"/>
</dbReference>
<dbReference type="PROSITE" id="PS00028">
    <property type="entry name" value="ZINC_FINGER_C2H2_1"/>
    <property type="match status" value="2"/>
</dbReference>
<dbReference type="PROSITE" id="PS50157">
    <property type="entry name" value="ZINC_FINGER_C2H2_2"/>
    <property type="match status" value="2"/>
</dbReference>
<organism>
    <name type="scientific">Penicillium oxalicum (strain 114-2 / CGMCC 5302)</name>
    <name type="common">Penicillium decumbens</name>
    <dbReference type="NCBI Taxonomy" id="933388"/>
    <lineage>
        <taxon>Eukaryota</taxon>
        <taxon>Fungi</taxon>
        <taxon>Dikarya</taxon>
        <taxon>Ascomycota</taxon>
        <taxon>Pezizomycotina</taxon>
        <taxon>Eurotiomycetes</taxon>
        <taxon>Eurotiomycetidae</taxon>
        <taxon>Eurotiales</taxon>
        <taxon>Aspergillaceae</taxon>
        <taxon>Penicillium</taxon>
    </lineage>
</organism>
<feature type="chain" id="PRO_0000435947" description="C2H2 type master regulator of conidiophore development brlA">
    <location>
        <begin position="1"/>
        <end position="431"/>
    </location>
</feature>
<feature type="zinc finger region" description="C2H2-type 1" evidence="3">
    <location>
        <begin position="321"/>
        <end position="345"/>
    </location>
</feature>
<feature type="zinc finger region" description="C2H2-type 2" evidence="3">
    <location>
        <begin position="351"/>
        <end position="376"/>
    </location>
</feature>
<feature type="region of interest" description="Disordered" evidence="4">
    <location>
        <begin position="29"/>
        <end position="51"/>
    </location>
</feature>
<feature type="region of interest" description="Disordered" evidence="4">
    <location>
        <begin position="211"/>
        <end position="275"/>
    </location>
</feature>
<feature type="region of interest" description="Disordered" evidence="4">
    <location>
        <begin position="287"/>
        <end position="306"/>
    </location>
</feature>
<feature type="region of interest" description="Disordered" evidence="4">
    <location>
        <begin position="390"/>
        <end position="412"/>
    </location>
</feature>
<feature type="compositionally biased region" description="Low complexity" evidence="4">
    <location>
        <begin position="30"/>
        <end position="48"/>
    </location>
</feature>
<feature type="compositionally biased region" description="Polar residues" evidence="4">
    <location>
        <begin position="225"/>
        <end position="265"/>
    </location>
</feature>
<feature type="compositionally biased region" description="Basic residues" evidence="4">
    <location>
        <begin position="287"/>
        <end position="302"/>
    </location>
</feature>
<keyword id="KW-0010">Activator</keyword>
<keyword id="KW-0183">Conidiation</keyword>
<keyword id="KW-0238">DNA-binding</keyword>
<keyword id="KW-0479">Metal-binding</keyword>
<keyword id="KW-0539">Nucleus</keyword>
<keyword id="KW-1185">Reference proteome</keyword>
<keyword id="KW-0677">Repeat</keyword>
<keyword id="KW-0749">Sporulation</keyword>
<keyword id="KW-0804">Transcription</keyword>
<keyword id="KW-0805">Transcription regulation</keyword>
<keyword id="KW-0862">Zinc</keyword>
<keyword id="KW-0863">Zinc-finger</keyword>
<proteinExistence type="evidence at transcript level"/>
<comment type="function">
    <text evidence="2 5">BrlA, abaA and wetA are pivotal regulators of conidiophore development and conidium maturation (PubMed:24113825). They act individually and together to regulate their own expression and that of numerous other sporulation-specific genes (By similarity). Binds promoters of target genes at brlA response elements (BREs) containing the conserved sequence 5'-(C/A)(A/G)AGGG(G/A)-3' (By similarity). Regulates the expression levels of seven secondary metabolism gene clusters including a down-regulated cluster putatively involved in the biosynthesis of the mycotoxins roquefortine C and meleagrin (PubMed:24113825). Negatively regulates the expression of cellulase genes (PubMed:24113825).</text>
</comment>
<comment type="subcellular location">
    <subcellularLocation>
        <location evidence="1">Nucleus</location>
    </subcellularLocation>
</comment>
<comment type="induction">
    <text evidence="6">Expression is controlled by the casein kinase CK2 (PubMed:24613994).</text>
</comment>
<comment type="disruption phenotype">
    <text evidence="5">Blocks conidia formation and increases hyphal branching (PubMed:24113825). Affects the expression of seven secondary metabolism gene clusters including those in the biosynthesis of roquefortine C and meleagrin, and up-regulates the expression levels of most cellulase genes (PubMed:24113825).</text>
</comment>
<reference key="1">
    <citation type="journal article" date="2013" name="PLoS ONE">
        <title>Genomic and secretomic analyses reveal unique features of the lignocellulolytic enzyme system of Penicillium decumbens.</title>
        <authorList>
            <person name="Liu G."/>
            <person name="Zhang L."/>
            <person name="Wei X."/>
            <person name="Zou G."/>
            <person name="Qin Y."/>
            <person name="Ma L."/>
            <person name="Li J."/>
            <person name="Zheng H."/>
            <person name="Wang S."/>
            <person name="Wang C."/>
            <person name="Xun L."/>
            <person name="Zhao G.-P."/>
            <person name="Zhou Z."/>
            <person name="Qu Y."/>
        </authorList>
    </citation>
    <scope>NUCLEOTIDE SEQUENCE [LARGE SCALE GENOMIC DNA]</scope>
    <source>
        <strain>114-2 / CGMCC 5302</strain>
    </source>
</reference>
<reference key="2">
    <citation type="journal article" date="2013" name="Appl. Microbiol. Biotechnol.">
        <title>Penicillium decumbens BrlA extensively regulates secondary metabolism and functionally associates with the expression of cellulase genes.</title>
        <authorList>
            <person name="Qin Y."/>
            <person name="Bao L."/>
            <person name="Gao M."/>
            <person name="Chen M."/>
            <person name="Lei Y."/>
            <person name="Liu G."/>
            <person name="Qu Y."/>
        </authorList>
    </citation>
    <scope>FUNCTION</scope>
    <scope>DISRUPTION PHENOTYPE</scope>
</reference>
<reference key="3">
    <citation type="journal article" date="2014" name="Fungal Genet. Biol.">
        <title>Functional characterization of protein kinase CK2 regulatory subunits regulating Penicillium oxalicum asexual development and hydrolytic enzyme production.</title>
        <authorList>
            <person name="Lei Y."/>
            <person name="Liu G."/>
            <person name="Li Z."/>
            <person name="Gao L."/>
            <person name="Qin Y."/>
            <person name="Qu Y."/>
        </authorList>
    </citation>
    <scope>INDUCTION</scope>
</reference>
<sequence>MRTQGQQISDRLTVEVDCHSLGPADCPSMTSSFSPLESPTPTPTSLYSHGSLTSPSWHEAGHYHSLPMERRPSGTPLRNAFRVTDFPSADPMGMQVGTMERPDQLPVSSEYLSGYDDINDQLWIPHDSIPKTFEHPTFPYQAPMPQYHHTMGRNHYYRPQAHTAYLPESASNPCLSRPMFSRHDGLSHSASMSNMLPWMTAPESLAPQTITPQQAFPGAGPVTPPSSNYSDFPASLQTFKPHTPSTPVRSLSLGTPRSDTPQSRMSGHYDYSEEYPVSPVYRDGHLIRTHRQPSRKPSKKQLVRSNLSLEKLPPIIKQVQFKCKEPGCKGRFKRQEHLKRHMKSHSKEKPHVCWVPGCHRAFSRSDNLNAHYTKTHSKRGGRNRYVATLDETSPDYDPEFRGQLTPDGRPIYGSKLEDLADCDLSVDGWED</sequence>
<evidence type="ECO:0000250" key="1">
    <source>
        <dbReference type="UniProtKB" id="P10069"/>
    </source>
</evidence>
<evidence type="ECO:0000250" key="2">
    <source>
        <dbReference type="UniProtKB" id="P22022"/>
    </source>
</evidence>
<evidence type="ECO:0000255" key="3">
    <source>
        <dbReference type="PROSITE-ProRule" id="PRU00042"/>
    </source>
</evidence>
<evidence type="ECO:0000256" key="4">
    <source>
        <dbReference type="SAM" id="MobiDB-lite"/>
    </source>
</evidence>
<evidence type="ECO:0000269" key="5">
    <source>
    </source>
</evidence>
<evidence type="ECO:0000269" key="6">
    <source>
    </source>
</evidence>
<evidence type="ECO:0000303" key="7">
    <source>
    </source>
</evidence>
<evidence type="ECO:0000305" key="8"/>
<name>BRLA_PENO1</name>
<protein>
    <recommendedName>
        <fullName evidence="8">C2H2 type master regulator of conidiophore development brlA</fullName>
    </recommendedName>
</protein>